<geneLocation type="chloroplast"/>
<gene>
    <name evidence="1" type="primary">TIC214</name>
    <name type="synonym">ycf1</name>
</gene>
<feature type="chain" id="PRO_0000262602" description="Protein TIC 214">
    <location>
        <begin position="1"/>
        <end position="1828"/>
    </location>
</feature>
<feature type="transmembrane region" description="Helical" evidence="2">
    <location>
        <begin position="18"/>
        <end position="38"/>
    </location>
</feature>
<feature type="transmembrane region" description="Helical" evidence="2">
    <location>
        <begin position="64"/>
        <end position="84"/>
    </location>
</feature>
<feature type="transmembrane region" description="Helical" evidence="2">
    <location>
        <begin position="87"/>
        <end position="107"/>
    </location>
</feature>
<feature type="transmembrane region" description="Helical" evidence="2">
    <location>
        <begin position="124"/>
        <end position="144"/>
    </location>
</feature>
<feature type="transmembrane region" description="Helical" evidence="2">
    <location>
        <begin position="172"/>
        <end position="192"/>
    </location>
</feature>
<feature type="transmembrane region" description="Helical" evidence="2">
    <location>
        <begin position="222"/>
        <end position="242"/>
    </location>
</feature>
<feature type="region of interest" description="Disordered" evidence="3">
    <location>
        <begin position="270"/>
        <end position="301"/>
    </location>
</feature>
<feature type="region of interest" description="Disordered" evidence="3">
    <location>
        <begin position="618"/>
        <end position="637"/>
    </location>
</feature>
<feature type="region of interest" description="Disordered" evidence="3">
    <location>
        <begin position="741"/>
        <end position="763"/>
    </location>
</feature>
<feature type="region of interest" description="Disordered" evidence="3">
    <location>
        <begin position="1533"/>
        <end position="1571"/>
    </location>
</feature>
<feature type="compositionally biased region" description="Basic and acidic residues" evidence="3">
    <location>
        <begin position="270"/>
        <end position="279"/>
    </location>
</feature>
<feature type="compositionally biased region" description="Basic and acidic residues" evidence="3">
    <location>
        <begin position="1550"/>
        <end position="1562"/>
    </location>
</feature>
<dbReference type="EMBL" id="AJ428413">
    <property type="protein sequence ID" value="CAD28780.1"/>
    <property type="molecule type" value="Genomic_DNA"/>
</dbReference>
<dbReference type="RefSeq" id="NP_862813.1">
    <property type="nucleotide sequence ID" value="NC_004993.1"/>
</dbReference>
<dbReference type="GeneID" id="2598087"/>
<dbReference type="GO" id="GO:0009706">
    <property type="term" value="C:chloroplast inner membrane"/>
    <property type="evidence" value="ECO:0007669"/>
    <property type="project" value="UniProtKB-SubCell"/>
</dbReference>
<dbReference type="GO" id="GO:0015031">
    <property type="term" value="P:protein transport"/>
    <property type="evidence" value="ECO:0007669"/>
    <property type="project" value="UniProtKB-KW"/>
</dbReference>
<dbReference type="InterPro" id="IPR008896">
    <property type="entry name" value="TIC214"/>
</dbReference>
<dbReference type="PANTHER" id="PTHR33163:SF40">
    <property type="entry name" value="PROTEIN TIC 214"/>
    <property type="match status" value="1"/>
</dbReference>
<dbReference type="PANTHER" id="PTHR33163">
    <property type="entry name" value="PROTEIN TIC 214-RELATED"/>
    <property type="match status" value="1"/>
</dbReference>
<dbReference type="Pfam" id="PF05758">
    <property type="entry name" value="Ycf1"/>
    <property type="match status" value="2"/>
</dbReference>
<organism>
    <name type="scientific">Calycanthus floridus var. glaucus</name>
    <name type="common">Eastern sweetshrub</name>
    <name type="synonym">Calycanthus fertilis var. ferax</name>
    <dbReference type="NCBI Taxonomy" id="212734"/>
    <lineage>
        <taxon>Eukaryota</taxon>
        <taxon>Viridiplantae</taxon>
        <taxon>Streptophyta</taxon>
        <taxon>Embryophyta</taxon>
        <taxon>Tracheophyta</taxon>
        <taxon>Spermatophyta</taxon>
        <taxon>Magnoliopsida</taxon>
        <taxon>Magnoliidae</taxon>
        <taxon>Laurales</taxon>
        <taxon>Calycanthaceae</taxon>
        <taxon>Calycanthus</taxon>
    </lineage>
</organism>
<keyword id="KW-0150">Chloroplast</keyword>
<keyword id="KW-0472">Membrane</keyword>
<keyword id="KW-0934">Plastid</keyword>
<keyword id="KW-1001">Plastid inner membrane</keyword>
<keyword id="KW-0653">Protein transport</keyword>
<keyword id="KW-0812">Transmembrane</keyword>
<keyword id="KW-1133">Transmembrane helix</keyword>
<keyword id="KW-0813">Transport</keyword>
<reference key="1">
    <citation type="journal article" date="2003" name="Plant Syst. Evol.">
        <title>The chloroplast genome of the 'basal' angiosperm Calycanthus fertilis -- structural and phylogenetic analyses.</title>
        <authorList>
            <person name="Goremykin V."/>
            <person name="Hirsch-Ernst K.I."/>
            <person name="Woelfl S."/>
            <person name="Hellwig F.H."/>
        </authorList>
    </citation>
    <scope>NUCLEOTIDE SEQUENCE [LARGE SCALE GENOMIC DNA]</scope>
</reference>
<evidence type="ECO:0000250" key="1">
    <source>
        <dbReference type="UniProtKB" id="P56785"/>
    </source>
</evidence>
<evidence type="ECO:0000255" key="2"/>
<evidence type="ECO:0000256" key="3">
    <source>
        <dbReference type="SAM" id="MobiDB-lite"/>
    </source>
</evidence>
<evidence type="ECO:0000305" key="4"/>
<comment type="function">
    <text evidence="1">Involved in protein precursor import into chloroplasts. May be part of an intermediate translocation complex acting as a protein-conducting channel at the inner envelope.</text>
</comment>
<comment type="subunit">
    <text evidence="1">Part of the Tic complex.</text>
</comment>
<comment type="subcellular location">
    <subcellularLocation>
        <location evidence="1">Plastid</location>
        <location evidence="1">Chloroplast inner membrane</location>
        <topology evidence="2">Multi-pass membrane protein</topology>
    </subcellularLocation>
</comment>
<comment type="similarity">
    <text evidence="4">Belongs to the TIC214 family.</text>
</comment>
<protein>
    <recommendedName>
        <fullName evidence="1">Protein TIC 214</fullName>
    </recommendedName>
    <alternativeName>
        <fullName evidence="1">Translocon at the inner envelope membrane of chloroplasts 214</fullName>
        <shortName evidence="1">AtTIC214</shortName>
    </alternativeName>
</protein>
<sequence length="1828" mass="217554">MILKSFLLGNLLSLCMKIINSVVVVGLYYGFLTTFSIGPSYLFLLRARVMEEGTEKEVSATTGFITGQLMIFISIYYAPLHLAMGRPYTITVLGLPYLLFHFFWKNHKHFFDYGSTNLNSMRNFSIQSIFLNNFIFQLLNHFVLPSSTLIRLVNISMFRCNNKTLFVISSFVGWLIGHILFMKWVGLILFWIQRNRSIRSNPLIRSNKYLVSELRNFLSRMVNIFLFITCVYYLGRIPSPILTKKLKETSETEEGEENEDETNVEIEKFSEAKETKQEQKGSFAEEDSSLGSEEREDPNKLYGKKRKGYQENWKFEILKDKDLFWFEKPIVTLLFDYKRWDRPLRYIKNDRFANAVRNEMSQYFFHKCPVDGKQKISFTYPPSLSIFFEMIEKHLSLCTTEKLSPEDLYNHWVYTNEKKRCNLNNEFINRIEALNKGSLSMHVLEKRTRLYNDKNEQECLPRMYDPFLNGPYRGTIKKVYSHSILDASTTSTEDSLRVVWINKIDDILPTNYQEFEEKMDPFNGESLSTDINHSLASTSELAGESPMDFRFNLKEGLVLPAEQKQRRFDSENPMKYLKFLFDAITTDTPNYKTIQTKSIGIEEIGKKVPRWSYKLTNDLQQQERENEEESTEDHAIRSRKSKRVVIYTDNDKNPNTPISTNGNQAEEVALIRYSQQSDFRRDLIKGSRRAQRRKTVTWEIFQANVHSPLFLDRIDKTFFFSFDISGTINLAFRNWTEKGSEFKTSNSDEKETKEKEKKREDKKEENERIAIAETWDTIIFAQAIRGIMLVTQSILRKYIVLPSLIIAKNLVRMLLFQFPEWYEDLKEWNREMHVKCTYNGVQLSETEFPKDWLTDGIQIKILFPFCLKPWHRSKLRPHHRDPMKKKGKKDNFCFLTVWGMETELPFGSSRKRPSFFEPILKELEKKIRKAKKKYFLVLSVLKEWFRKVSKEKTRWIRKIVLFIKKIIKEFAKVNSILLFGRKKVYESNENKKDSITIISNKILSEPTIRIRSMDWTNYSLTEKKMKDLADRTTTIRNQIERITKEKRTIFLTPDRNGSPNETSCDDKRSESQKHIWQISKRRSAWFIRKWRYFIKIFSERIYIDIFLCAINIPRVNAQLFFESTKKILDKYIYNDQRKKEGIDETNPNKLISISKKYFSNISNKKSRIYWDLSSLSQAYLFYKLSQTQVINKYRLKSVLQYRDLFLRDRIRDYLGTRGIFDSKFKKLPNSGMGEWKNWLRGHYQYNLSQTRWSRLVSKKWRDRVNQHRTIQNKDYKRDSYEKDQFIHYEKQNDSVVNSLPSQKEKFQKHYRYDLFSYKYINYGVNYGDSKDSYRSPLQVNEDRGIPYNYNTPKSESVFVLGGIALSDYLEEKYIIDRGKSRDKKYLEWKILNFCLRKNIDIEAWTNINKNTKIGTNDYQIIDKKNPFYLTTYQEINPLNPKSFFFGRMGMNQGMLYRPIANLEPWFFSEFVPLYDAYKIKPWIIPIKLLLFNFEGNETISENKNINGNKKGELPISSNQKDYLELENRNQEEKEEFGQGNLGSDTQNQQKDVEKDYAKSDIKKRGKKRQSKSNKGAELQFFLKRYLLFQLRWDDPLNQRMMNNVKVYCLLLRLINPREIAISSIQRGEMRLDVMLIQKDLTLTELIKRGILIIEPVRLSIKWDGQFIMYQTIGISLVHKNKHQTNRRYREKRYVDENYFDGSIAQHGKMLVNRAENDYDLLVPENILSPRRRRELRILISFNSGNRNVVDRNLVFFNGNNVKNFGQFLDEDKHIDTDINKFIQFKLFLWPNYRLEDLACINRYWFDTNNGSRFSMLRIHMYPPRFGIG</sequence>
<name>TI214_CALFG</name>
<proteinExistence type="inferred from homology"/>
<accession>Q7YJS6</accession>